<feature type="chain" id="PRO_0000381184" description="Biotin synthase">
    <location>
        <begin position="1"/>
        <end position="362"/>
    </location>
</feature>
<feature type="domain" description="Radical SAM core" evidence="2">
    <location>
        <begin position="46"/>
        <end position="273"/>
    </location>
</feature>
<feature type="region of interest" description="Disordered" evidence="3">
    <location>
        <begin position="320"/>
        <end position="339"/>
    </location>
</feature>
<feature type="binding site" evidence="1">
    <location>
        <position position="61"/>
    </location>
    <ligand>
        <name>[4Fe-4S] cluster</name>
        <dbReference type="ChEBI" id="CHEBI:49883"/>
        <note>4Fe-4S-S-AdoMet</note>
    </ligand>
</feature>
<feature type="binding site" evidence="1">
    <location>
        <position position="65"/>
    </location>
    <ligand>
        <name>[4Fe-4S] cluster</name>
        <dbReference type="ChEBI" id="CHEBI:49883"/>
        <note>4Fe-4S-S-AdoMet</note>
    </ligand>
</feature>
<feature type="binding site" evidence="1">
    <location>
        <position position="68"/>
    </location>
    <ligand>
        <name>[4Fe-4S] cluster</name>
        <dbReference type="ChEBI" id="CHEBI:49883"/>
        <note>4Fe-4S-S-AdoMet</note>
    </ligand>
</feature>
<feature type="binding site" evidence="1">
    <location>
        <position position="105"/>
    </location>
    <ligand>
        <name>[2Fe-2S] cluster</name>
        <dbReference type="ChEBI" id="CHEBI:190135"/>
    </ligand>
</feature>
<feature type="binding site" evidence="1">
    <location>
        <position position="136"/>
    </location>
    <ligand>
        <name>[2Fe-2S] cluster</name>
        <dbReference type="ChEBI" id="CHEBI:190135"/>
    </ligand>
</feature>
<feature type="binding site" evidence="1">
    <location>
        <position position="196"/>
    </location>
    <ligand>
        <name>[2Fe-2S] cluster</name>
        <dbReference type="ChEBI" id="CHEBI:190135"/>
    </ligand>
</feature>
<feature type="binding site" evidence="1">
    <location>
        <position position="268"/>
    </location>
    <ligand>
        <name>[2Fe-2S] cluster</name>
        <dbReference type="ChEBI" id="CHEBI:190135"/>
    </ligand>
</feature>
<evidence type="ECO:0000255" key="1">
    <source>
        <dbReference type="HAMAP-Rule" id="MF_01694"/>
    </source>
</evidence>
<evidence type="ECO:0000255" key="2">
    <source>
        <dbReference type="PROSITE-ProRule" id="PRU01266"/>
    </source>
</evidence>
<evidence type="ECO:0000256" key="3">
    <source>
        <dbReference type="SAM" id="MobiDB-lite"/>
    </source>
</evidence>
<gene>
    <name evidence="1" type="primary">bioB</name>
    <name type="ordered locus">AHA_1489</name>
</gene>
<comment type="function">
    <text evidence="1">Catalyzes the conversion of dethiobiotin (DTB) to biotin by the insertion of a sulfur atom into dethiobiotin via a radical-based mechanism.</text>
</comment>
<comment type="catalytic activity">
    <reaction evidence="1">
        <text>(4R,5S)-dethiobiotin + (sulfur carrier)-SH + 2 reduced [2Fe-2S]-[ferredoxin] + 2 S-adenosyl-L-methionine = (sulfur carrier)-H + biotin + 2 5'-deoxyadenosine + 2 L-methionine + 2 oxidized [2Fe-2S]-[ferredoxin]</text>
        <dbReference type="Rhea" id="RHEA:22060"/>
        <dbReference type="Rhea" id="RHEA-COMP:10000"/>
        <dbReference type="Rhea" id="RHEA-COMP:10001"/>
        <dbReference type="Rhea" id="RHEA-COMP:14737"/>
        <dbReference type="Rhea" id="RHEA-COMP:14739"/>
        <dbReference type="ChEBI" id="CHEBI:17319"/>
        <dbReference type="ChEBI" id="CHEBI:29917"/>
        <dbReference type="ChEBI" id="CHEBI:33737"/>
        <dbReference type="ChEBI" id="CHEBI:33738"/>
        <dbReference type="ChEBI" id="CHEBI:57586"/>
        <dbReference type="ChEBI" id="CHEBI:57844"/>
        <dbReference type="ChEBI" id="CHEBI:59789"/>
        <dbReference type="ChEBI" id="CHEBI:64428"/>
        <dbReference type="ChEBI" id="CHEBI:149473"/>
        <dbReference type="EC" id="2.8.1.6"/>
    </reaction>
</comment>
<comment type="cofactor">
    <cofactor evidence="1">
        <name>[4Fe-4S] cluster</name>
        <dbReference type="ChEBI" id="CHEBI:49883"/>
    </cofactor>
    <text evidence="1">Binds 1 [4Fe-4S] cluster. The cluster is coordinated with 3 cysteines and an exchangeable S-adenosyl-L-methionine.</text>
</comment>
<comment type="cofactor">
    <cofactor evidence="1">
        <name>[2Fe-2S] cluster</name>
        <dbReference type="ChEBI" id="CHEBI:190135"/>
    </cofactor>
    <text evidence="1">Binds 1 [2Fe-2S] cluster. The cluster is coordinated with 3 cysteines and 1 arginine.</text>
</comment>
<comment type="pathway">
    <text evidence="1">Cofactor biosynthesis; biotin biosynthesis; biotin from 7,8-diaminononanoate: step 2/2.</text>
</comment>
<comment type="subunit">
    <text evidence="1">Homodimer.</text>
</comment>
<comment type="similarity">
    <text evidence="1">Belongs to the radical SAM superfamily. Biotin synthase family.</text>
</comment>
<organism>
    <name type="scientific">Aeromonas hydrophila subsp. hydrophila (strain ATCC 7966 / DSM 30187 / BCRC 13018 / CCUG 14551 / JCM 1027 / KCTC 2358 / NCIMB 9240 / NCTC 8049)</name>
    <dbReference type="NCBI Taxonomy" id="380703"/>
    <lineage>
        <taxon>Bacteria</taxon>
        <taxon>Pseudomonadati</taxon>
        <taxon>Pseudomonadota</taxon>
        <taxon>Gammaproteobacteria</taxon>
        <taxon>Aeromonadales</taxon>
        <taxon>Aeromonadaceae</taxon>
        <taxon>Aeromonas</taxon>
    </lineage>
</organism>
<name>BIOB_AERHH</name>
<reference key="1">
    <citation type="journal article" date="2006" name="J. Bacteriol.">
        <title>Genome sequence of Aeromonas hydrophila ATCC 7966T: jack of all trades.</title>
        <authorList>
            <person name="Seshadri R."/>
            <person name="Joseph S.W."/>
            <person name="Chopra A.K."/>
            <person name="Sha J."/>
            <person name="Shaw J."/>
            <person name="Graf J."/>
            <person name="Haft D.H."/>
            <person name="Wu M."/>
            <person name="Ren Q."/>
            <person name="Rosovitz M.J."/>
            <person name="Madupu R."/>
            <person name="Tallon L."/>
            <person name="Kim M."/>
            <person name="Jin S."/>
            <person name="Vuong H."/>
            <person name="Stine O.C."/>
            <person name="Ali A."/>
            <person name="Horneman A.J."/>
            <person name="Heidelberg J.F."/>
        </authorList>
    </citation>
    <scope>NUCLEOTIDE SEQUENCE [LARGE SCALE GENOMIC DNA]</scope>
    <source>
        <strain>ATCC 7966 / DSM 30187 / BCRC 13018 / CCUG 14551 / JCM 1027 / KCTC 2358 / NCIMB 9240 / NCTC 8049</strain>
    </source>
</reference>
<protein>
    <recommendedName>
        <fullName evidence="1">Biotin synthase</fullName>
        <ecNumber evidence="1">2.8.1.6</ecNumber>
    </recommendedName>
</protein>
<dbReference type="EC" id="2.8.1.6" evidence="1"/>
<dbReference type="EMBL" id="CP000462">
    <property type="protein sequence ID" value="ABK36458.1"/>
    <property type="molecule type" value="Genomic_DNA"/>
</dbReference>
<dbReference type="RefSeq" id="WP_011705387.1">
    <property type="nucleotide sequence ID" value="NC_008570.1"/>
</dbReference>
<dbReference type="RefSeq" id="YP_856027.1">
    <property type="nucleotide sequence ID" value="NC_008570.1"/>
</dbReference>
<dbReference type="SMR" id="A0KIC6"/>
<dbReference type="STRING" id="380703.AHA_1489"/>
<dbReference type="EnsemblBacteria" id="ABK36458">
    <property type="protein sequence ID" value="ABK36458"/>
    <property type="gene ID" value="AHA_1489"/>
</dbReference>
<dbReference type="GeneID" id="4487690"/>
<dbReference type="KEGG" id="aha:AHA_1489"/>
<dbReference type="PATRIC" id="fig|380703.7.peg.1500"/>
<dbReference type="eggNOG" id="COG0502">
    <property type="taxonomic scope" value="Bacteria"/>
</dbReference>
<dbReference type="HOGENOM" id="CLU_033172_1_2_6"/>
<dbReference type="OrthoDB" id="9786826at2"/>
<dbReference type="UniPathway" id="UPA00078">
    <property type="reaction ID" value="UER00162"/>
</dbReference>
<dbReference type="Proteomes" id="UP000000756">
    <property type="component" value="Chromosome"/>
</dbReference>
<dbReference type="GO" id="GO:0051537">
    <property type="term" value="F:2 iron, 2 sulfur cluster binding"/>
    <property type="evidence" value="ECO:0007669"/>
    <property type="project" value="UniProtKB-KW"/>
</dbReference>
<dbReference type="GO" id="GO:0051539">
    <property type="term" value="F:4 iron, 4 sulfur cluster binding"/>
    <property type="evidence" value="ECO:0007669"/>
    <property type="project" value="UniProtKB-KW"/>
</dbReference>
<dbReference type="GO" id="GO:0004076">
    <property type="term" value="F:biotin synthase activity"/>
    <property type="evidence" value="ECO:0007669"/>
    <property type="project" value="UniProtKB-UniRule"/>
</dbReference>
<dbReference type="GO" id="GO:0005506">
    <property type="term" value="F:iron ion binding"/>
    <property type="evidence" value="ECO:0007669"/>
    <property type="project" value="UniProtKB-UniRule"/>
</dbReference>
<dbReference type="GO" id="GO:0009102">
    <property type="term" value="P:biotin biosynthetic process"/>
    <property type="evidence" value="ECO:0007669"/>
    <property type="project" value="UniProtKB-UniRule"/>
</dbReference>
<dbReference type="CDD" id="cd01335">
    <property type="entry name" value="Radical_SAM"/>
    <property type="match status" value="1"/>
</dbReference>
<dbReference type="FunFam" id="3.20.20.70:FF:000011">
    <property type="entry name" value="Biotin synthase"/>
    <property type="match status" value="1"/>
</dbReference>
<dbReference type="Gene3D" id="3.20.20.70">
    <property type="entry name" value="Aldolase class I"/>
    <property type="match status" value="1"/>
</dbReference>
<dbReference type="HAMAP" id="MF_01694">
    <property type="entry name" value="BioB"/>
    <property type="match status" value="1"/>
</dbReference>
<dbReference type="InterPro" id="IPR013785">
    <property type="entry name" value="Aldolase_TIM"/>
</dbReference>
<dbReference type="InterPro" id="IPR010722">
    <property type="entry name" value="BATS_dom"/>
</dbReference>
<dbReference type="InterPro" id="IPR002684">
    <property type="entry name" value="Biotin_synth/BioAB"/>
</dbReference>
<dbReference type="InterPro" id="IPR024177">
    <property type="entry name" value="Biotin_synthase"/>
</dbReference>
<dbReference type="InterPro" id="IPR006638">
    <property type="entry name" value="Elp3/MiaA/NifB-like_rSAM"/>
</dbReference>
<dbReference type="InterPro" id="IPR007197">
    <property type="entry name" value="rSAM"/>
</dbReference>
<dbReference type="NCBIfam" id="TIGR00433">
    <property type="entry name" value="bioB"/>
    <property type="match status" value="1"/>
</dbReference>
<dbReference type="PANTHER" id="PTHR22976">
    <property type="entry name" value="BIOTIN SYNTHASE"/>
    <property type="match status" value="1"/>
</dbReference>
<dbReference type="PANTHER" id="PTHR22976:SF2">
    <property type="entry name" value="BIOTIN SYNTHASE, MITOCHONDRIAL"/>
    <property type="match status" value="1"/>
</dbReference>
<dbReference type="Pfam" id="PF06968">
    <property type="entry name" value="BATS"/>
    <property type="match status" value="1"/>
</dbReference>
<dbReference type="Pfam" id="PF04055">
    <property type="entry name" value="Radical_SAM"/>
    <property type="match status" value="1"/>
</dbReference>
<dbReference type="PIRSF" id="PIRSF001619">
    <property type="entry name" value="Biotin_synth"/>
    <property type="match status" value="1"/>
</dbReference>
<dbReference type="SFLD" id="SFLDF00272">
    <property type="entry name" value="biotin_synthase"/>
    <property type="match status" value="1"/>
</dbReference>
<dbReference type="SFLD" id="SFLDG01278">
    <property type="entry name" value="biotin_synthase_like"/>
    <property type="match status" value="1"/>
</dbReference>
<dbReference type="SMART" id="SM00876">
    <property type="entry name" value="BATS"/>
    <property type="match status" value="1"/>
</dbReference>
<dbReference type="SMART" id="SM00729">
    <property type="entry name" value="Elp3"/>
    <property type="match status" value="1"/>
</dbReference>
<dbReference type="SUPFAM" id="SSF102114">
    <property type="entry name" value="Radical SAM enzymes"/>
    <property type="match status" value="1"/>
</dbReference>
<dbReference type="PROSITE" id="PS51918">
    <property type="entry name" value="RADICAL_SAM"/>
    <property type="match status" value="1"/>
</dbReference>
<proteinExistence type="inferred from homology"/>
<keyword id="KW-0001">2Fe-2S</keyword>
<keyword id="KW-0004">4Fe-4S</keyword>
<keyword id="KW-0093">Biotin biosynthesis</keyword>
<keyword id="KW-0408">Iron</keyword>
<keyword id="KW-0411">Iron-sulfur</keyword>
<keyword id="KW-0479">Metal-binding</keyword>
<keyword id="KW-1185">Reference proteome</keyword>
<keyword id="KW-0949">S-adenosyl-L-methionine</keyword>
<keyword id="KW-0808">Transferase</keyword>
<accession>A0KIC6</accession>
<sequence length="362" mass="40295">MNAVTAGAHALRHDWTLAEVQALFALPFNDLLFQAQTVHRAHFDPNEVQVSTLLSIKTGACPEDCKYCPQSARYHTGLEAERLMEVEKVLERAREAKANGSSRFCMGAAWRNPKEKDMPYILRMIEEVRGLGMETCMTLGMLTADQAARLGAAGLDYYNHNLDTSPEFYGDIITTRTYQDRLDTLAYVRGAGMKVCSGGIVGMGEQAKDRAGLLMALANLPRHPESVPINMLVKVKGTPLENQENLDPFEFIRTIAVARIMMPASHVRLSAGREKMNEQMQAMCFMAGANSIFYGCKLLTTPNPDENSDMQLFKRLGIRPAQRAQKPDQVQEEELLAEVSRQSEPAEMFYDATRPRAGAARS</sequence>